<name>FMT_BARBK</name>
<proteinExistence type="inferred from homology"/>
<accession>A1UUB5</accession>
<gene>
    <name evidence="1" type="primary">fmt</name>
    <name type="ordered locus">BARBAKC583_1320</name>
</gene>
<reference key="1">
    <citation type="submission" date="2006-12" db="EMBL/GenBank/DDBJ databases">
        <authorList>
            <person name="Hendrix L."/>
            <person name="Mohamoud Y."/>
            <person name="Radune D."/>
            <person name="Shvartsbeyn A."/>
            <person name="Daugherty S."/>
            <person name="Dodson R."/>
            <person name="Durkin A.S."/>
            <person name="Harkins D."/>
            <person name="Huot H."/>
            <person name="Kothari S.P."/>
            <person name="Madupu R."/>
            <person name="Li J."/>
            <person name="Nelson W.C."/>
            <person name="Shrivastava S."/>
            <person name="Giglio M.G."/>
            <person name="Haft D."/>
            <person name="Selengut J."/>
            <person name="Fraser-Ligget C."/>
            <person name="Seshadri R."/>
        </authorList>
    </citation>
    <scope>NUCLEOTIDE SEQUENCE [LARGE SCALE GENOMIC DNA]</scope>
    <source>
        <strain>ATCC 35685 / KC583 / Herrer 020/F12,63</strain>
    </source>
</reference>
<organism>
    <name type="scientific">Bartonella bacilliformis (strain ATCC 35685 / KC583 / Herrer 020/F12,63)</name>
    <dbReference type="NCBI Taxonomy" id="360095"/>
    <lineage>
        <taxon>Bacteria</taxon>
        <taxon>Pseudomonadati</taxon>
        <taxon>Pseudomonadota</taxon>
        <taxon>Alphaproteobacteria</taxon>
        <taxon>Hyphomicrobiales</taxon>
        <taxon>Bartonellaceae</taxon>
        <taxon>Bartonella</taxon>
    </lineage>
</organism>
<dbReference type="EC" id="2.1.2.9" evidence="1"/>
<dbReference type="EMBL" id="CP000524">
    <property type="protein sequence ID" value="ABM45602.1"/>
    <property type="molecule type" value="Genomic_DNA"/>
</dbReference>
<dbReference type="RefSeq" id="WP_005768106.1">
    <property type="nucleotide sequence ID" value="NC_008783.1"/>
</dbReference>
<dbReference type="SMR" id="A1UUB5"/>
<dbReference type="STRING" id="360095.BARBAKC583_1320"/>
<dbReference type="GeneID" id="4684295"/>
<dbReference type="KEGG" id="bbk:BARBAKC583_1320"/>
<dbReference type="PATRIC" id="fig|360095.6.peg.1292"/>
<dbReference type="eggNOG" id="COG0223">
    <property type="taxonomic scope" value="Bacteria"/>
</dbReference>
<dbReference type="HOGENOM" id="CLU_033347_1_2_5"/>
<dbReference type="OrthoDB" id="9802815at2"/>
<dbReference type="Proteomes" id="UP000000643">
    <property type="component" value="Chromosome"/>
</dbReference>
<dbReference type="GO" id="GO:0005829">
    <property type="term" value="C:cytosol"/>
    <property type="evidence" value="ECO:0007669"/>
    <property type="project" value="TreeGrafter"/>
</dbReference>
<dbReference type="GO" id="GO:0004479">
    <property type="term" value="F:methionyl-tRNA formyltransferase activity"/>
    <property type="evidence" value="ECO:0007669"/>
    <property type="project" value="UniProtKB-UniRule"/>
</dbReference>
<dbReference type="CDD" id="cd08646">
    <property type="entry name" value="FMT_core_Met-tRNA-FMT_N"/>
    <property type="match status" value="1"/>
</dbReference>
<dbReference type="CDD" id="cd08704">
    <property type="entry name" value="Met_tRNA_FMT_C"/>
    <property type="match status" value="1"/>
</dbReference>
<dbReference type="Gene3D" id="3.40.50.12230">
    <property type="match status" value="1"/>
</dbReference>
<dbReference type="HAMAP" id="MF_00182">
    <property type="entry name" value="Formyl_trans"/>
    <property type="match status" value="1"/>
</dbReference>
<dbReference type="InterPro" id="IPR005794">
    <property type="entry name" value="Fmt"/>
</dbReference>
<dbReference type="InterPro" id="IPR005793">
    <property type="entry name" value="Formyl_trans_C"/>
</dbReference>
<dbReference type="InterPro" id="IPR002376">
    <property type="entry name" value="Formyl_transf_N"/>
</dbReference>
<dbReference type="InterPro" id="IPR036477">
    <property type="entry name" value="Formyl_transf_N_sf"/>
</dbReference>
<dbReference type="InterPro" id="IPR011034">
    <property type="entry name" value="Formyl_transferase-like_C_sf"/>
</dbReference>
<dbReference type="InterPro" id="IPR001555">
    <property type="entry name" value="GART_AS"/>
</dbReference>
<dbReference type="InterPro" id="IPR044135">
    <property type="entry name" value="Met-tRNA-FMT_C"/>
</dbReference>
<dbReference type="InterPro" id="IPR041711">
    <property type="entry name" value="Met-tRNA-FMT_N"/>
</dbReference>
<dbReference type="NCBIfam" id="TIGR00460">
    <property type="entry name" value="fmt"/>
    <property type="match status" value="1"/>
</dbReference>
<dbReference type="PANTHER" id="PTHR11138">
    <property type="entry name" value="METHIONYL-TRNA FORMYLTRANSFERASE"/>
    <property type="match status" value="1"/>
</dbReference>
<dbReference type="PANTHER" id="PTHR11138:SF5">
    <property type="entry name" value="METHIONYL-TRNA FORMYLTRANSFERASE, MITOCHONDRIAL"/>
    <property type="match status" value="1"/>
</dbReference>
<dbReference type="Pfam" id="PF02911">
    <property type="entry name" value="Formyl_trans_C"/>
    <property type="match status" value="1"/>
</dbReference>
<dbReference type="Pfam" id="PF00551">
    <property type="entry name" value="Formyl_trans_N"/>
    <property type="match status" value="1"/>
</dbReference>
<dbReference type="SUPFAM" id="SSF50486">
    <property type="entry name" value="FMT C-terminal domain-like"/>
    <property type="match status" value="1"/>
</dbReference>
<dbReference type="SUPFAM" id="SSF53328">
    <property type="entry name" value="Formyltransferase"/>
    <property type="match status" value="1"/>
</dbReference>
<dbReference type="PROSITE" id="PS00373">
    <property type="entry name" value="GART"/>
    <property type="match status" value="1"/>
</dbReference>
<protein>
    <recommendedName>
        <fullName evidence="1">Methionyl-tRNA formyltransferase</fullName>
        <ecNumber evidence="1">2.1.2.9</ecNumber>
    </recommendedName>
</protein>
<feature type="chain" id="PRO_1000020021" description="Methionyl-tRNA formyltransferase">
    <location>
        <begin position="1"/>
        <end position="309"/>
    </location>
</feature>
<feature type="binding site" evidence="1">
    <location>
        <begin position="112"/>
        <end position="115"/>
    </location>
    <ligand>
        <name>(6S)-5,6,7,8-tetrahydrofolate</name>
        <dbReference type="ChEBI" id="CHEBI:57453"/>
    </ligand>
</feature>
<sequence length="309" mass="33030">MALRLSFMGTPDFAVPVLHALLNAGHDIVAVYSQPPRPAGRRGLQLVSSPVQNAAEAKSIPVFTPQSLKTAEEQARFAALSVDAAVVVAYGILLPKAILEAPRFGCFNAHASLLPRWRGAAPIQRAIMAGDKETGMMIMQMNEGLDTGPIALSRSIAITENITAAELSDKLSHMGAELIVEALSALEKGQLTLTPQSLEGVSYASKIKKEETQIDWTKSAEVIHKYICALSPYPGCWCTMTIGGKPERVKILGSRLATGDSLGIGRIEAGHLIIHCGQGRIEITHLQRAGSRILDSSTFLRGANISAVF</sequence>
<keyword id="KW-0648">Protein biosynthesis</keyword>
<keyword id="KW-0808">Transferase</keyword>
<comment type="function">
    <text evidence="1">Attaches a formyl group to the free amino group of methionyl-tRNA(fMet). The formyl group appears to play a dual role in the initiator identity of N-formylmethionyl-tRNA by promoting its recognition by IF2 and preventing the misappropriation of this tRNA by the elongation apparatus.</text>
</comment>
<comment type="catalytic activity">
    <reaction evidence="1">
        <text>L-methionyl-tRNA(fMet) + (6R)-10-formyltetrahydrofolate = N-formyl-L-methionyl-tRNA(fMet) + (6S)-5,6,7,8-tetrahydrofolate + H(+)</text>
        <dbReference type="Rhea" id="RHEA:24380"/>
        <dbReference type="Rhea" id="RHEA-COMP:9952"/>
        <dbReference type="Rhea" id="RHEA-COMP:9953"/>
        <dbReference type="ChEBI" id="CHEBI:15378"/>
        <dbReference type="ChEBI" id="CHEBI:57453"/>
        <dbReference type="ChEBI" id="CHEBI:78530"/>
        <dbReference type="ChEBI" id="CHEBI:78844"/>
        <dbReference type="ChEBI" id="CHEBI:195366"/>
        <dbReference type="EC" id="2.1.2.9"/>
    </reaction>
</comment>
<comment type="similarity">
    <text evidence="1">Belongs to the Fmt family.</text>
</comment>
<evidence type="ECO:0000255" key="1">
    <source>
        <dbReference type="HAMAP-Rule" id="MF_00182"/>
    </source>
</evidence>